<name>PUR9_RIPO1</name>
<comment type="catalytic activity">
    <reaction evidence="1">
        <text>(6R)-10-formyltetrahydrofolate + 5-amino-1-(5-phospho-beta-D-ribosyl)imidazole-4-carboxamide = 5-formamido-1-(5-phospho-D-ribosyl)imidazole-4-carboxamide + (6S)-5,6,7,8-tetrahydrofolate</text>
        <dbReference type="Rhea" id="RHEA:22192"/>
        <dbReference type="ChEBI" id="CHEBI:57453"/>
        <dbReference type="ChEBI" id="CHEBI:58467"/>
        <dbReference type="ChEBI" id="CHEBI:58475"/>
        <dbReference type="ChEBI" id="CHEBI:195366"/>
        <dbReference type="EC" id="2.1.2.3"/>
    </reaction>
</comment>
<comment type="catalytic activity">
    <reaction evidence="1">
        <text>IMP + H2O = 5-formamido-1-(5-phospho-D-ribosyl)imidazole-4-carboxamide</text>
        <dbReference type="Rhea" id="RHEA:18445"/>
        <dbReference type="ChEBI" id="CHEBI:15377"/>
        <dbReference type="ChEBI" id="CHEBI:58053"/>
        <dbReference type="ChEBI" id="CHEBI:58467"/>
        <dbReference type="EC" id="3.5.4.10"/>
    </reaction>
</comment>
<comment type="pathway">
    <text evidence="1">Purine metabolism; IMP biosynthesis via de novo pathway; 5-formamido-1-(5-phospho-D-ribosyl)imidazole-4-carboxamide from 5-amino-1-(5-phospho-D-ribosyl)imidazole-4-carboxamide (10-formyl THF route): step 1/1.</text>
</comment>
<comment type="pathway">
    <text evidence="1">Purine metabolism; IMP biosynthesis via de novo pathway; IMP from 5-formamido-1-(5-phospho-D-ribosyl)imidazole-4-carboxamide: step 1/1.</text>
</comment>
<comment type="domain">
    <text evidence="1">The IMP cyclohydrolase activity resides in the N-terminal region.</text>
</comment>
<comment type="similarity">
    <text evidence="1">Belongs to the PurH family.</text>
</comment>
<sequence>MTRLALLSVSDKTGIIDLAQQLIHQFDFELISSGGTAKALQAAGLPVTKVSEYTGSPEILGGRVKTLHPRIHGGILGRRDLPQDTQDMETHQIHPIDLVVVNLYPFEQTIANPNVTVAEAIENIDIGGPTLLRAAAKNYAHVTVLSNPKYYDTYLQELAENNGEVSLEFRQKMAGETFALTNSYDGAIANYFMTLSSENESTLPSRFTVSGTQFQSLRYGENPHQQAAWYQTGTQPSGWAAATQLQGKELSYNNLVDLEAARRIIAEFNPQEPAVAILKHTNPCGVAVGNTLADAYEKAFNADSISAFGGIIALNQPLDKETASLLTKTFLECVVAPGCDDEAKEILTAKSKVRVLVLPDLMNGPKQTIKVIAGGLLVQASDDVIDTPDSWKIVTEKQPTLQQLAELLFAWKVAKHVKSNAIVVTKNRTTLGIGAGQMNRVGSVKIALEQAGEAAMGGCLASDGFFPFDDSVRTAAAAGIKVIVQPGGSVKDKDSIAAANELGLVMMLTGIRHFLH</sequence>
<protein>
    <recommendedName>
        <fullName evidence="1">Bifunctional purine biosynthesis protein PurH</fullName>
    </recommendedName>
    <domain>
        <recommendedName>
            <fullName evidence="1">Phosphoribosylaminoimidazolecarboxamide formyltransferase</fullName>
            <ecNumber evidence="1">2.1.2.3</ecNumber>
        </recommendedName>
        <alternativeName>
            <fullName evidence="1">AICAR transformylase</fullName>
        </alternativeName>
    </domain>
    <domain>
        <recommendedName>
            <fullName evidence="1">IMP cyclohydrolase</fullName>
            <ecNumber evidence="1">3.5.4.10</ecNumber>
        </recommendedName>
        <alternativeName>
            <fullName evidence="1">ATIC</fullName>
        </alternativeName>
        <alternativeName>
            <fullName evidence="1">IMP synthase</fullName>
        </alternativeName>
        <alternativeName>
            <fullName evidence="1">Inosinicase</fullName>
        </alternativeName>
    </domain>
</protein>
<reference key="1">
    <citation type="journal article" date="2011" name="MBio">
        <title>Novel metabolic attributes of the genus Cyanothece, comprising a group of unicellular nitrogen-fixing Cyanobacteria.</title>
        <authorList>
            <person name="Bandyopadhyay A."/>
            <person name="Elvitigala T."/>
            <person name="Welsh E."/>
            <person name="Stockel J."/>
            <person name="Liberton M."/>
            <person name="Min H."/>
            <person name="Sherman L.A."/>
            <person name="Pakrasi H.B."/>
        </authorList>
    </citation>
    <scope>NUCLEOTIDE SEQUENCE [LARGE SCALE GENOMIC DNA]</scope>
    <source>
        <strain>PCC 8801 / RF-1</strain>
    </source>
</reference>
<accession>B7K3N8</accession>
<keyword id="KW-0378">Hydrolase</keyword>
<keyword id="KW-0511">Multifunctional enzyme</keyword>
<keyword id="KW-0658">Purine biosynthesis</keyword>
<keyword id="KW-1185">Reference proteome</keyword>
<keyword id="KW-0808">Transferase</keyword>
<gene>
    <name evidence="1" type="primary">purH</name>
    <name type="ordered locus">PCC8801_1316</name>
</gene>
<feature type="chain" id="PRO_1000117869" description="Bifunctional purine biosynthesis protein PurH">
    <location>
        <begin position="1"/>
        <end position="516"/>
    </location>
</feature>
<feature type="domain" description="MGS-like" evidence="2">
    <location>
        <begin position="1"/>
        <end position="146"/>
    </location>
</feature>
<organism>
    <name type="scientific">Rippkaea orientalis (strain PCC 8801 / RF-1)</name>
    <name type="common">Cyanothece sp. (strain PCC 8801)</name>
    <dbReference type="NCBI Taxonomy" id="41431"/>
    <lineage>
        <taxon>Bacteria</taxon>
        <taxon>Bacillati</taxon>
        <taxon>Cyanobacteriota</taxon>
        <taxon>Cyanophyceae</taxon>
        <taxon>Oscillatoriophycideae</taxon>
        <taxon>Chroococcales</taxon>
        <taxon>Aphanothecaceae</taxon>
        <taxon>Rippkaea</taxon>
        <taxon>Rippkaea orientalis</taxon>
    </lineage>
</organism>
<evidence type="ECO:0000255" key="1">
    <source>
        <dbReference type="HAMAP-Rule" id="MF_00139"/>
    </source>
</evidence>
<evidence type="ECO:0000255" key="2">
    <source>
        <dbReference type="PROSITE-ProRule" id="PRU01202"/>
    </source>
</evidence>
<dbReference type="EC" id="2.1.2.3" evidence="1"/>
<dbReference type="EC" id="3.5.4.10" evidence="1"/>
<dbReference type="EMBL" id="CP001287">
    <property type="protein sequence ID" value="ACK65380.1"/>
    <property type="molecule type" value="Genomic_DNA"/>
</dbReference>
<dbReference type="RefSeq" id="WP_012594654.1">
    <property type="nucleotide sequence ID" value="NC_011726.1"/>
</dbReference>
<dbReference type="SMR" id="B7K3N8"/>
<dbReference type="STRING" id="41431.PCC8801_1316"/>
<dbReference type="KEGG" id="cyp:PCC8801_1316"/>
<dbReference type="eggNOG" id="COG0138">
    <property type="taxonomic scope" value="Bacteria"/>
</dbReference>
<dbReference type="HOGENOM" id="CLU_016316_5_2_3"/>
<dbReference type="OrthoDB" id="9802065at2"/>
<dbReference type="UniPathway" id="UPA00074">
    <property type="reaction ID" value="UER00133"/>
</dbReference>
<dbReference type="UniPathway" id="UPA00074">
    <property type="reaction ID" value="UER00135"/>
</dbReference>
<dbReference type="Proteomes" id="UP000008204">
    <property type="component" value="Chromosome"/>
</dbReference>
<dbReference type="GO" id="GO:0005829">
    <property type="term" value="C:cytosol"/>
    <property type="evidence" value="ECO:0007669"/>
    <property type="project" value="TreeGrafter"/>
</dbReference>
<dbReference type="GO" id="GO:0003937">
    <property type="term" value="F:IMP cyclohydrolase activity"/>
    <property type="evidence" value="ECO:0007669"/>
    <property type="project" value="UniProtKB-UniRule"/>
</dbReference>
<dbReference type="GO" id="GO:0004643">
    <property type="term" value="F:phosphoribosylaminoimidazolecarboxamide formyltransferase activity"/>
    <property type="evidence" value="ECO:0007669"/>
    <property type="project" value="UniProtKB-UniRule"/>
</dbReference>
<dbReference type="GO" id="GO:0006189">
    <property type="term" value="P:'de novo' IMP biosynthetic process"/>
    <property type="evidence" value="ECO:0007669"/>
    <property type="project" value="UniProtKB-UniRule"/>
</dbReference>
<dbReference type="CDD" id="cd01421">
    <property type="entry name" value="IMPCH"/>
    <property type="match status" value="1"/>
</dbReference>
<dbReference type="FunFam" id="3.40.140.20:FF:000001">
    <property type="entry name" value="Bifunctional purine biosynthesis protein PurH"/>
    <property type="match status" value="1"/>
</dbReference>
<dbReference type="FunFam" id="3.40.50.1380:FF:000001">
    <property type="entry name" value="Bifunctional purine biosynthesis protein PurH"/>
    <property type="match status" value="1"/>
</dbReference>
<dbReference type="Gene3D" id="3.40.140.20">
    <property type="match status" value="2"/>
</dbReference>
<dbReference type="Gene3D" id="3.40.50.1380">
    <property type="entry name" value="Methylglyoxal synthase-like domain"/>
    <property type="match status" value="1"/>
</dbReference>
<dbReference type="HAMAP" id="MF_00139">
    <property type="entry name" value="PurH"/>
    <property type="match status" value="1"/>
</dbReference>
<dbReference type="InterPro" id="IPR024051">
    <property type="entry name" value="AICAR_Tfase_dup_dom_sf"/>
</dbReference>
<dbReference type="InterPro" id="IPR016193">
    <property type="entry name" value="Cytidine_deaminase-like"/>
</dbReference>
<dbReference type="InterPro" id="IPR011607">
    <property type="entry name" value="MGS-like_dom"/>
</dbReference>
<dbReference type="InterPro" id="IPR036914">
    <property type="entry name" value="MGS-like_dom_sf"/>
</dbReference>
<dbReference type="InterPro" id="IPR002695">
    <property type="entry name" value="PurH-like"/>
</dbReference>
<dbReference type="NCBIfam" id="NF002049">
    <property type="entry name" value="PRK00881.1"/>
    <property type="match status" value="1"/>
</dbReference>
<dbReference type="NCBIfam" id="TIGR00355">
    <property type="entry name" value="purH"/>
    <property type="match status" value="1"/>
</dbReference>
<dbReference type="PANTHER" id="PTHR11692:SF0">
    <property type="entry name" value="BIFUNCTIONAL PURINE BIOSYNTHESIS PROTEIN ATIC"/>
    <property type="match status" value="1"/>
</dbReference>
<dbReference type="PANTHER" id="PTHR11692">
    <property type="entry name" value="BIFUNCTIONAL PURINE BIOSYNTHESIS PROTEIN PURH"/>
    <property type="match status" value="1"/>
</dbReference>
<dbReference type="Pfam" id="PF01808">
    <property type="entry name" value="AICARFT_IMPCHas"/>
    <property type="match status" value="1"/>
</dbReference>
<dbReference type="Pfam" id="PF02142">
    <property type="entry name" value="MGS"/>
    <property type="match status" value="1"/>
</dbReference>
<dbReference type="PIRSF" id="PIRSF000414">
    <property type="entry name" value="AICARFT_IMPCHas"/>
    <property type="match status" value="1"/>
</dbReference>
<dbReference type="SMART" id="SM00798">
    <property type="entry name" value="AICARFT_IMPCHas"/>
    <property type="match status" value="1"/>
</dbReference>
<dbReference type="SMART" id="SM00851">
    <property type="entry name" value="MGS"/>
    <property type="match status" value="1"/>
</dbReference>
<dbReference type="SUPFAM" id="SSF53927">
    <property type="entry name" value="Cytidine deaminase-like"/>
    <property type="match status" value="1"/>
</dbReference>
<dbReference type="SUPFAM" id="SSF52335">
    <property type="entry name" value="Methylglyoxal synthase-like"/>
    <property type="match status" value="1"/>
</dbReference>
<dbReference type="PROSITE" id="PS51855">
    <property type="entry name" value="MGS"/>
    <property type="match status" value="1"/>
</dbReference>
<proteinExistence type="inferred from homology"/>